<organism>
    <name type="scientific">Hericium erinaceus</name>
    <name type="common">Lion's mane mushroom</name>
    <name type="synonym">Hydnum erinaceus</name>
    <dbReference type="NCBI Taxonomy" id="91752"/>
    <lineage>
        <taxon>Eukaryota</taxon>
        <taxon>Fungi</taxon>
        <taxon>Dikarya</taxon>
        <taxon>Basidiomycota</taxon>
        <taxon>Agaricomycotina</taxon>
        <taxon>Agaricomycetes</taxon>
        <taxon>Russulales</taxon>
        <taxon>Hericiaceae</taxon>
        <taxon>Hericium</taxon>
    </lineage>
</organism>
<comment type="function">
    <text evidence="1 2 5">UDP-glycosyltransferase; part of the gene cluster that mediates the biosynthesis of erinacines, cyathane-xylosides that show unique biological activities, including leishmanicidal activity, stimulating activity for nerve growth-factor synthesis, and agonistic activity toward the kappa opioid receptor (PubMed:28371074, PubMed:31535864). Within the pathway, eriJ tranfers xylose from UDP-xylose onto C-14 of 11-O-acetyl-cyathatriol to form eracine Q, and, at a lower rate, glucose from UDP-D-glucose to produce eracine Q2 (PubMed:31535864). The first step of the erinacines biosynthesis pathway is catalyzed by the geranylgeranyl diphosphate (GGPP) synthase eriE via conversion of farnesyl pyrophosphate and isopentyl pyrophosphate into geranylgeranyl pyrophosphate (GGPP). GGPP is then substrate of the diterpene cyclase eriG for the production of cyatha-3,12-diene. The cytochrome P450 monooxygenase eriI then hydroxylates cyatha-3,12-diene at C-14 of the seven-membered ring to produce erinacol, which is further hydroxylated at C-15 by the cytochrome P450 monooxygenase eriC to yield cyathadiol. The cytochrome P450 monooxygenase eriA then catalyzes C-11 hydroxylation in the presence of the short chain dehydrogenase/reductase (SDR) eriH, which leads to the production of cyathatriol. The acetyltransferase eriL converts cyathatriol into 11-O-acetyl-cyathatriol. The SDR eriH catalyzes further oxidation of 11-O-acetyl-cyathatriol into 1-O-acetylcyathin A3. Finally, the glycosyl transferase eriJ tranfers xylose from UDP-xylose onto C-14 of 11-O-acetyl-cyathatriol to form eracine Q. EriJ is also able to convert 11-O-acetyl-cyathatriol to eracine Q2 by using UDP-D-glucose as cosubstrate, but at a lower rate (Probable).</text>
</comment>
<comment type="catalytic activity">
    <reaction evidence="2">
        <text>11-O-acetylcyathatriol + UDP-alpha-D-xylose = erinacine Q + UDP + H(+)</text>
        <dbReference type="Rhea" id="RHEA:75583"/>
        <dbReference type="ChEBI" id="CHEBI:15378"/>
        <dbReference type="ChEBI" id="CHEBI:57632"/>
        <dbReference type="ChEBI" id="CHEBI:58223"/>
        <dbReference type="ChEBI" id="CHEBI:194354"/>
        <dbReference type="ChEBI" id="CHEBI:194357"/>
    </reaction>
    <physiologicalReaction direction="left-to-right" evidence="2">
        <dbReference type="Rhea" id="RHEA:75584"/>
    </physiologicalReaction>
</comment>
<comment type="catalytic activity">
    <reaction evidence="2">
        <text>11-O-acetylcyathatriol + UDP-alpha-D-glucose = erinacine Q2 + UDP + H(+)</text>
        <dbReference type="Rhea" id="RHEA:75587"/>
        <dbReference type="ChEBI" id="CHEBI:15378"/>
        <dbReference type="ChEBI" id="CHEBI:58223"/>
        <dbReference type="ChEBI" id="CHEBI:58885"/>
        <dbReference type="ChEBI" id="CHEBI:194354"/>
        <dbReference type="ChEBI" id="CHEBI:194356"/>
    </reaction>
    <physiologicalReaction direction="left-to-right" evidence="2">
        <dbReference type="Rhea" id="RHEA:75588"/>
    </physiologicalReaction>
</comment>
<comment type="pathway">
    <text evidence="2">Secondary metabolite biosynthesis.</text>
</comment>
<comment type="induction">
    <text evidence="1">Expression is induced under erinacine P-producing conditions.</text>
</comment>
<comment type="similarity">
    <text evidence="4">Belongs to the UDP-glycosyltransferase family.</text>
</comment>
<accession>A0A1V0QSE8</accession>
<dbReference type="EC" id="2.4.1.-" evidence="2"/>
<dbReference type="EMBL" id="KY683785">
    <property type="protein sequence ID" value="ARE72247.1"/>
    <property type="molecule type" value="mRNA"/>
</dbReference>
<dbReference type="SMR" id="A0A1V0QSE8"/>
<dbReference type="BioCyc" id="MetaCyc:MONOMER-124262"/>
<dbReference type="GO" id="GO:0035251">
    <property type="term" value="F:UDP-glucosyltransferase activity"/>
    <property type="evidence" value="ECO:0007669"/>
    <property type="project" value="TreeGrafter"/>
</dbReference>
<dbReference type="CDD" id="cd03784">
    <property type="entry name" value="GT1_Gtf-like"/>
    <property type="match status" value="1"/>
</dbReference>
<dbReference type="Gene3D" id="3.40.50.2000">
    <property type="entry name" value="Glycogen Phosphorylase B"/>
    <property type="match status" value="2"/>
</dbReference>
<dbReference type="InterPro" id="IPR002213">
    <property type="entry name" value="UDP_glucos_trans"/>
</dbReference>
<dbReference type="PANTHER" id="PTHR48047">
    <property type="entry name" value="GLYCOSYLTRANSFERASE"/>
    <property type="match status" value="1"/>
</dbReference>
<dbReference type="PANTHER" id="PTHR48047:SF107">
    <property type="entry name" value="UDP-GLYCOSYLTRANSFERASE 92A1-LIKE"/>
    <property type="match status" value="1"/>
</dbReference>
<dbReference type="Pfam" id="PF00201">
    <property type="entry name" value="UDPGT"/>
    <property type="match status" value="1"/>
</dbReference>
<dbReference type="SUPFAM" id="SSF53756">
    <property type="entry name" value="UDP-Glycosyltransferase/glycogen phosphorylase"/>
    <property type="match status" value="1"/>
</dbReference>
<reference key="1">
    <citation type="journal article" date="2017" name="Angew. Chem. Int. Ed.">
        <title>Discovery and characterization of a new family of diterpene cyclases in bacteria and fungi.</title>
        <authorList>
            <person name="Yang Y.L."/>
            <person name="Zhang S."/>
            <person name="Ma K."/>
            <person name="Xu Y."/>
            <person name="Tao Q."/>
            <person name="Chen Y."/>
            <person name="Chen J."/>
            <person name="Guo S."/>
            <person name="Ren J."/>
            <person name="Wang W."/>
            <person name="Tao Y."/>
            <person name="Yin W.B."/>
            <person name="Liu H."/>
        </authorList>
    </citation>
    <scope>NUCLEOTIDE SEQUENCE [MRNA]</scope>
    <scope>FUNCTION</scope>
    <scope>INDUCTION</scope>
</reference>
<reference key="2">
    <citation type="journal article" date="2019" name="J. Am. Chem. Soc.">
        <title>Efficient reconstitution of basidiomycota diterpene erinacine gene cluster in ascomycota host Aspergillus oryzae based on genomic DNA sequences.</title>
        <authorList>
            <person name="Liu C."/>
            <person name="Minami A."/>
            <person name="Ozaki T."/>
            <person name="Wu J."/>
            <person name="Kawagishi H."/>
            <person name="Maruyama J.I."/>
            <person name="Oikawa H."/>
        </authorList>
    </citation>
    <scope>FUNCTION</scope>
    <scope>CATALYTIC ACTIVITY</scope>
    <scope>PATHWAY</scope>
</reference>
<proteinExistence type="evidence at protein level"/>
<feature type="chain" id="PRO_0000452927" description="UDP-glycosyltransferase eriJ">
    <location>
        <begin position="1"/>
        <end position="506"/>
    </location>
</feature>
<gene>
    <name evidence="3" type="primary">eriJ</name>
</gene>
<keyword id="KW-0328">Glycosyltransferase</keyword>
<keyword id="KW-0808">Transferase</keyword>
<protein>
    <recommendedName>
        <fullName evidence="3">UDP-glycosyltransferase eriJ</fullName>
        <ecNumber evidence="2">2.4.1.-</ecNumber>
    </recommendedName>
    <alternativeName>
        <fullName evidence="3">Erinacine biosynthesis cluster protein J</fullName>
    </alternativeName>
</protein>
<sequence>MSTQNYHIVAVPPNEWGHMRPMIAFLARLVAVSLNSVDITVTLIIAESAVAKARTELSIQLAGEGIQSAESRFEVVPTAVHMFWPADAYLPALKATYAEVIKKKEPDFALLESMIHPFFDVVRSSATKPIKVGAWLPVALPSWTSMAPICYIRDDPQAYVKQVETTMAEKGLGYMEAASDAYLSHVNGRVLRIPGFPEMTDYEGFPQEPPVLLPVAMVVDWVFGIRDADILVTSTAQALERQGLQVFSKWLKEQPKHSDILAVGPLTSQRTPEVARKEKEEADAGGFTAFLDAWAAKKGPKSVLYICFGSVLLPAEIEHLYAVMRVLLELQIPFIMVLSDAARAALPADLAAAVRDSGLVKLTPWAPQQYILAHAAVGWFLSHCGINGTLESLCLRVPMVCWPLFADQPVLSILVAQVYGCGYELGEVRKGFGLKYRASTGKTPGGTVEDVTREAREVFSKAFFNKAERAKVDANLEKMATELNAAWDAEGDARASALALLDFIRK</sequence>
<evidence type="ECO:0000269" key="1">
    <source>
    </source>
</evidence>
<evidence type="ECO:0000269" key="2">
    <source>
    </source>
</evidence>
<evidence type="ECO:0000303" key="3">
    <source>
    </source>
</evidence>
<evidence type="ECO:0000305" key="4"/>
<evidence type="ECO:0000305" key="5">
    <source>
    </source>
</evidence>
<name>ERIJ_HERER</name>